<name>RS3_BACAH</name>
<protein>
    <recommendedName>
        <fullName evidence="1">Small ribosomal subunit protein uS3</fullName>
    </recommendedName>
    <alternativeName>
        <fullName evidence="2">30S ribosomal protein S3</fullName>
    </alternativeName>
</protein>
<reference key="1">
    <citation type="journal article" date="2007" name="J. Bacteriol.">
        <title>The complete genome sequence of Bacillus thuringiensis Al Hakam.</title>
        <authorList>
            <person name="Challacombe J.F."/>
            <person name="Altherr M.R."/>
            <person name="Xie G."/>
            <person name="Bhotika S.S."/>
            <person name="Brown N."/>
            <person name="Bruce D."/>
            <person name="Campbell C.S."/>
            <person name="Campbell M.L."/>
            <person name="Chen J."/>
            <person name="Chertkov O."/>
            <person name="Cleland C."/>
            <person name="Dimitrijevic M."/>
            <person name="Doggett N.A."/>
            <person name="Fawcett J.J."/>
            <person name="Glavina T."/>
            <person name="Goodwin L.A."/>
            <person name="Green L.D."/>
            <person name="Han C.S."/>
            <person name="Hill K.K."/>
            <person name="Hitchcock P."/>
            <person name="Jackson P.J."/>
            <person name="Keim P."/>
            <person name="Kewalramani A.R."/>
            <person name="Longmire J."/>
            <person name="Lucas S."/>
            <person name="Malfatti S."/>
            <person name="Martinez D."/>
            <person name="McMurry K."/>
            <person name="Meincke L.J."/>
            <person name="Misra M."/>
            <person name="Moseman B.L."/>
            <person name="Mundt M."/>
            <person name="Munk A.C."/>
            <person name="Okinaka R.T."/>
            <person name="Parson-Quintana B."/>
            <person name="Reilly L.P."/>
            <person name="Richardson P."/>
            <person name="Robinson D.L."/>
            <person name="Saunders E."/>
            <person name="Tapia R."/>
            <person name="Tesmer J.G."/>
            <person name="Thayer N."/>
            <person name="Thompson L.S."/>
            <person name="Tice H."/>
            <person name="Ticknor L.O."/>
            <person name="Wills P.L."/>
            <person name="Gilna P."/>
            <person name="Brettin T.S."/>
        </authorList>
    </citation>
    <scope>NUCLEOTIDE SEQUENCE [LARGE SCALE GENOMIC DNA]</scope>
    <source>
        <strain>Al Hakam</strain>
    </source>
</reference>
<dbReference type="EMBL" id="CP000485">
    <property type="protein sequence ID" value="ABK83529.1"/>
    <property type="molecule type" value="Genomic_DNA"/>
</dbReference>
<dbReference type="RefSeq" id="WP_000529956.1">
    <property type="nucleotide sequence ID" value="NC_008600.1"/>
</dbReference>
<dbReference type="SMR" id="A0R8I6"/>
<dbReference type="GeneID" id="93010937"/>
<dbReference type="KEGG" id="btl:BALH_0114"/>
<dbReference type="HOGENOM" id="CLU_058591_0_2_9"/>
<dbReference type="GO" id="GO:0022627">
    <property type="term" value="C:cytosolic small ribosomal subunit"/>
    <property type="evidence" value="ECO:0007669"/>
    <property type="project" value="TreeGrafter"/>
</dbReference>
<dbReference type="GO" id="GO:0003729">
    <property type="term" value="F:mRNA binding"/>
    <property type="evidence" value="ECO:0007669"/>
    <property type="project" value="UniProtKB-UniRule"/>
</dbReference>
<dbReference type="GO" id="GO:0019843">
    <property type="term" value="F:rRNA binding"/>
    <property type="evidence" value="ECO:0007669"/>
    <property type="project" value="UniProtKB-UniRule"/>
</dbReference>
<dbReference type="GO" id="GO:0003735">
    <property type="term" value="F:structural constituent of ribosome"/>
    <property type="evidence" value="ECO:0007669"/>
    <property type="project" value="InterPro"/>
</dbReference>
<dbReference type="GO" id="GO:0006412">
    <property type="term" value="P:translation"/>
    <property type="evidence" value="ECO:0007669"/>
    <property type="project" value="UniProtKB-UniRule"/>
</dbReference>
<dbReference type="CDD" id="cd02412">
    <property type="entry name" value="KH-II_30S_S3"/>
    <property type="match status" value="1"/>
</dbReference>
<dbReference type="FunFam" id="3.30.1140.32:FF:000001">
    <property type="entry name" value="30S ribosomal protein S3"/>
    <property type="match status" value="1"/>
</dbReference>
<dbReference type="FunFam" id="3.30.300.20:FF:000001">
    <property type="entry name" value="30S ribosomal protein S3"/>
    <property type="match status" value="1"/>
</dbReference>
<dbReference type="Gene3D" id="3.30.300.20">
    <property type="match status" value="1"/>
</dbReference>
<dbReference type="Gene3D" id="3.30.1140.32">
    <property type="entry name" value="Ribosomal protein S3, C-terminal domain"/>
    <property type="match status" value="1"/>
</dbReference>
<dbReference type="HAMAP" id="MF_01309_B">
    <property type="entry name" value="Ribosomal_uS3_B"/>
    <property type="match status" value="1"/>
</dbReference>
<dbReference type="InterPro" id="IPR004087">
    <property type="entry name" value="KH_dom"/>
</dbReference>
<dbReference type="InterPro" id="IPR015946">
    <property type="entry name" value="KH_dom-like_a/b"/>
</dbReference>
<dbReference type="InterPro" id="IPR004044">
    <property type="entry name" value="KH_dom_type_2"/>
</dbReference>
<dbReference type="InterPro" id="IPR009019">
    <property type="entry name" value="KH_sf_prok-type"/>
</dbReference>
<dbReference type="InterPro" id="IPR036419">
    <property type="entry name" value="Ribosomal_S3_C_sf"/>
</dbReference>
<dbReference type="InterPro" id="IPR005704">
    <property type="entry name" value="Ribosomal_uS3_bac-typ"/>
</dbReference>
<dbReference type="InterPro" id="IPR001351">
    <property type="entry name" value="Ribosomal_uS3_C"/>
</dbReference>
<dbReference type="InterPro" id="IPR018280">
    <property type="entry name" value="Ribosomal_uS3_CS"/>
</dbReference>
<dbReference type="NCBIfam" id="TIGR01009">
    <property type="entry name" value="rpsC_bact"/>
    <property type="match status" value="1"/>
</dbReference>
<dbReference type="PANTHER" id="PTHR11760">
    <property type="entry name" value="30S/40S RIBOSOMAL PROTEIN S3"/>
    <property type="match status" value="1"/>
</dbReference>
<dbReference type="PANTHER" id="PTHR11760:SF19">
    <property type="entry name" value="SMALL RIBOSOMAL SUBUNIT PROTEIN US3C"/>
    <property type="match status" value="1"/>
</dbReference>
<dbReference type="Pfam" id="PF07650">
    <property type="entry name" value="KH_2"/>
    <property type="match status" value="1"/>
</dbReference>
<dbReference type="Pfam" id="PF00189">
    <property type="entry name" value="Ribosomal_S3_C"/>
    <property type="match status" value="1"/>
</dbReference>
<dbReference type="SMART" id="SM00322">
    <property type="entry name" value="KH"/>
    <property type="match status" value="1"/>
</dbReference>
<dbReference type="SUPFAM" id="SSF54814">
    <property type="entry name" value="Prokaryotic type KH domain (KH-domain type II)"/>
    <property type="match status" value="1"/>
</dbReference>
<dbReference type="SUPFAM" id="SSF54821">
    <property type="entry name" value="Ribosomal protein S3 C-terminal domain"/>
    <property type="match status" value="1"/>
</dbReference>
<dbReference type="PROSITE" id="PS50823">
    <property type="entry name" value="KH_TYPE_2"/>
    <property type="match status" value="1"/>
</dbReference>
<dbReference type="PROSITE" id="PS00548">
    <property type="entry name" value="RIBOSOMAL_S3"/>
    <property type="match status" value="1"/>
</dbReference>
<feature type="chain" id="PRO_0000293754" description="Small ribosomal subunit protein uS3">
    <location>
        <begin position="1"/>
        <end position="219"/>
    </location>
</feature>
<feature type="domain" description="KH type-2" evidence="1">
    <location>
        <begin position="38"/>
        <end position="106"/>
    </location>
</feature>
<accession>A0R8I6</accession>
<organism>
    <name type="scientific">Bacillus thuringiensis (strain Al Hakam)</name>
    <dbReference type="NCBI Taxonomy" id="412694"/>
    <lineage>
        <taxon>Bacteria</taxon>
        <taxon>Bacillati</taxon>
        <taxon>Bacillota</taxon>
        <taxon>Bacilli</taxon>
        <taxon>Bacillales</taxon>
        <taxon>Bacillaceae</taxon>
        <taxon>Bacillus</taxon>
        <taxon>Bacillus cereus group</taxon>
    </lineage>
</organism>
<keyword id="KW-0687">Ribonucleoprotein</keyword>
<keyword id="KW-0689">Ribosomal protein</keyword>
<keyword id="KW-0694">RNA-binding</keyword>
<keyword id="KW-0699">rRNA-binding</keyword>
<proteinExistence type="inferred from homology"/>
<gene>
    <name evidence="1" type="primary">rpsC</name>
    <name type="ordered locus">BALH_0114</name>
</gene>
<comment type="function">
    <text evidence="1">Binds the lower part of the 30S subunit head. Binds mRNA in the 70S ribosome, positioning it for translation.</text>
</comment>
<comment type="subunit">
    <text evidence="1">Part of the 30S ribosomal subunit. Forms a tight complex with proteins S10 and S14.</text>
</comment>
<comment type="similarity">
    <text evidence="1">Belongs to the universal ribosomal protein uS3 family.</text>
</comment>
<sequence length="219" mass="24294">MGQKVNPIGLRVGVIRDWESRWFAEKDYATLLHEDIKIREYINVRLKDSAVAKVEIERAANRVNVTIHTAKPGMVIGKGGTEVEALRKALNQLTGKRVHINILEVKRADLNAKLVGENIARQLENRVSFRRAQKQVIQRAMRAGAKGIKTQVSGRLGGADIARAESYSEGTVPLHTLRADIDYAAVEADTTYGKLGVKVWIYRGEVLPTKKKASEEGGK</sequence>
<evidence type="ECO:0000255" key="1">
    <source>
        <dbReference type="HAMAP-Rule" id="MF_01309"/>
    </source>
</evidence>
<evidence type="ECO:0000305" key="2"/>